<reference key="1">
    <citation type="journal article" date="2005" name="Genome Res.">
        <title>Comparative and functional genomic analyses of the pathogenicity of phytopathogen Xanthomonas campestris pv. campestris.</title>
        <authorList>
            <person name="Qian W."/>
            <person name="Jia Y."/>
            <person name="Ren S.-X."/>
            <person name="He Y.-Q."/>
            <person name="Feng J.-X."/>
            <person name="Lu L.-F."/>
            <person name="Sun Q."/>
            <person name="Ying G."/>
            <person name="Tang D.-J."/>
            <person name="Tang H."/>
            <person name="Wu W."/>
            <person name="Hao P."/>
            <person name="Wang L."/>
            <person name="Jiang B.-L."/>
            <person name="Zeng S."/>
            <person name="Gu W.-Y."/>
            <person name="Lu G."/>
            <person name="Rong L."/>
            <person name="Tian Y."/>
            <person name="Yao Z."/>
            <person name="Fu G."/>
            <person name="Chen B."/>
            <person name="Fang R."/>
            <person name="Qiang B."/>
            <person name="Chen Z."/>
            <person name="Zhao G.-P."/>
            <person name="Tang J.-L."/>
            <person name="He C."/>
        </authorList>
    </citation>
    <scope>NUCLEOTIDE SEQUENCE [LARGE SCALE GENOMIC DNA]</scope>
    <source>
        <strain>8004</strain>
    </source>
</reference>
<sequence>MPHTPDLDAAVATLARGGVIAYPTEAVWGLGCDPRQEDAVLRLLEIKRRPVDKGVIVVASGLDVLQDWIDIAALGSEQLTAVLAQWPGPHTWILPVTAQAPRWVTGDHDGLAVRISAHPVVAALCKAWGAPLVSTSANLAGEPPARSRAALDPALLARIDGVLDGEVGGLAQPTPIRDARTGQILRD</sequence>
<evidence type="ECO:0000255" key="1">
    <source>
        <dbReference type="HAMAP-Rule" id="MF_01852"/>
    </source>
</evidence>
<feature type="chain" id="PRO_0000353011" description="Threonylcarbamoyl-AMP synthase">
    <location>
        <begin position="1"/>
        <end position="187"/>
    </location>
</feature>
<feature type="domain" description="YrdC-like" evidence="1">
    <location>
        <begin position="4"/>
        <end position="187"/>
    </location>
</feature>
<proteinExistence type="inferred from homology"/>
<dbReference type="EC" id="2.7.7.87" evidence="1"/>
<dbReference type="EMBL" id="CP000050">
    <property type="protein sequence ID" value="AAY50866.1"/>
    <property type="molecule type" value="Genomic_DNA"/>
</dbReference>
<dbReference type="RefSeq" id="WP_011038838.1">
    <property type="nucleotide sequence ID" value="NZ_CP155948.1"/>
</dbReference>
<dbReference type="SMR" id="Q4UQ07"/>
<dbReference type="KEGG" id="xcb:XC_3826"/>
<dbReference type="HOGENOM" id="CLU_031397_6_0_6"/>
<dbReference type="Proteomes" id="UP000000420">
    <property type="component" value="Chromosome"/>
</dbReference>
<dbReference type="GO" id="GO:0005737">
    <property type="term" value="C:cytoplasm"/>
    <property type="evidence" value="ECO:0007669"/>
    <property type="project" value="UniProtKB-SubCell"/>
</dbReference>
<dbReference type="GO" id="GO:0005524">
    <property type="term" value="F:ATP binding"/>
    <property type="evidence" value="ECO:0007669"/>
    <property type="project" value="UniProtKB-UniRule"/>
</dbReference>
<dbReference type="GO" id="GO:0003725">
    <property type="term" value="F:double-stranded RNA binding"/>
    <property type="evidence" value="ECO:0007669"/>
    <property type="project" value="InterPro"/>
</dbReference>
<dbReference type="GO" id="GO:0061710">
    <property type="term" value="F:L-threonylcarbamoyladenylate synthase"/>
    <property type="evidence" value="ECO:0007669"/>
    <property type="project" value="UniProtKB-EC"/>
</dbReference>
<dbReference type="GO" id="GO:0000049">
    <property type="term" value="F:tRNA binding"/>
    <property type="evidence" value="ECO:0007669"/>
    <property type="project" value="TreeGrafter"/>
</dbReference>
<dbReference type="GO" id="GO:0006450">
    <property type="term" value="P:regulation of translational fidelity"/>
    <property type="evidence" value="ECO:0007669"/>
    <property type="project" value="TreeGrafter"/>
</dbReference>
<dbReference type="GO" id="GO:0002949">
    <property type="term" value="P:tRNA threonylcarbamoyladenosine modification"/>
    <property type="evidence" value="ECO:0007669"/>
    <property type="project" value="UniProtKB-UniRule"/>
</dbReference>
<dbReference type="FunFam" id="3.90.870.10:FF:000004">
    <property type="entry name" value="Threonylcarbamoyl-AMP synthase"/>
    <property type="match status" value="1"/>
</dbReference>
<dbReference type="Gene3D" id="3.90.870.10">
    <property type="entry name" value="DHBP synthase"/>
    <property type="match status" value="1"/>
</dbReference>
<dbReference type="HAMAP" id="MF_01852">
    <property type="entry name" value="TsaC"/>
    <property type="match status" value="1"/>
</dbReference>
<dbReference type="InterPro" id="IPR017945">
    <property type="entry name" value="DHBP_synth_RibB-like_a/b_dom"/>
</dbReference>
<dbReference type="InterPro" id="IPR006070">
    <property type="entry name" value="Sua5-like_dom"/>
</dbReference>
<dbReference type="InterPro" id="IPR023535">
    <property type="entry name" value="TC-AMP_synthase"/>
</dbReference>
<dbReference type="InterPro" id="IPR050156">
    <property type="entry name" value="TC-AMP_synthase_SUA5"/>
</dbReference>
<dbReference type="PANTHER" id="PTHR17490">
    <property type="entry name" value="SUA5"/>
    <property type="match status" value="1"/>
</dbReference>
<dbReference type="PANTHER" id="PTHR17490:SF18">
    <property type="entry name" value="THREONYLCARBAMOYL-AMP SYNTHASE"/>
    <property type="match status" value="1"/>
</dbReference>
<dbReference type="Pfam" id="PF01300">
    <property type="entry name" value="Sua5_yciO_yrdC"/>
    <property type="match status" value="1"/>
</dbReference>
<dbReference type="SUPFAM" id="SSF55821">
    <property type="entry name" value="YrdC/RibB"/>
    <property type="match status" value="1"/>
</dbReference>
<dbReference type="PROSITE" id="PS51163">
    <property type="entry name" value="YRDC"/>
    <property type="match status" value="1"/>
</dbReference>
<organism>
    <name type="scientific">Xanthomonas campestris pv. campestris (strain 8004)</name>
    <dbReference type="NCBI Taxonomy" id="314565"/>
    <lineage>
        <taxon>Bacteria</taxon>
        <taxon>Pseudomonadati</taxon>
        <taxon>Pseudomonadota</taxon>
        <taxon>Gammaproteobacteria</taxon>
        <taxon>Lysobacterales</taxon>
        <taxon>Lysobacteraceae</taxon>
        <taxon>Xanthomonas</taxon>
    </lineage>
</organism>
<protein>
    <recommendedName>
        <fullName evidence="1">Threonylcarbamoyl-AMP synthase</fullName>
        <shortName evidence="1">TC-AMP synthase</shortName>
        <ecNumber evidence="1">2.7.7.87</ecNumber>
    </recommendedName>
    <alternativeName>
        <fullName evidence="1">L-threonylcarbamoyladenylate synthase</fullName>
    </alternativeName>
    <alternativeName>
        <fullName evidence="1">t(6)A37 threonylcarbamoyladenosine biosynthesis protein TsaC</fullName>
    </alternativeName>
    <alternativeName>
        <fullName evidence="1">tRNA threonylcarbamoyladenosine biosynthesis protein TsaC</fullName>
    </alternativeName>
</protein>
<comment type="function">
    <text evidence="1">Required for the formation of a threonylcarbamoyl group on adenosine at position 37 (t(6)A37) in tRNAs that read codons beginning with adenine. Catalyzes the conversion of L-threonine, HCO(3)(-)/CO(2) and ATP to give threonylcarbamoyl-AMP (TC-AMP) as the acyladenylate intermediate, with the release of diphosphate.</text>
</comment>
<comment type="catalytic activity">
    <reaction evidence="1">
        <text>L-threonine + hydrogencarbonate + ATP = L-threonylcarbamoyladenylate + diphosphate + H2O</text>
        <dbReference type="Rhea" id="RHEA:36407"/>
        <dbReference type="ChEBI" id="CHEBI:15377"/>
        <dbReference type="ChEBI" id="CHEBI:17544"/>
        <dbReference type="ChEBI" id="CHEBI:30616"/>
        <dbReference type="ChEBI" id="CHEBI:33019"/>
        <dbReference type="ChEBI" id="CHEBI:57926"/>
        <dbReference type="ChEBI" id="CHEBI:73682"/>
        <dbReference type="EC" id="2.7.7.87"/>
    </reaction>
</comment>
<comment type="subcellular location">
    <subcellularLocation>
        <location evidence="1">Cytoplasm</location>
    </subcellularLocation>
</comment>
<comment type="similarity">
    <text evidence="1">Belongs to the SUA5 family. TsaC subfamily.</text>
</comment>
<name>TSAC_XANC8</name>
<keyword id="KW-0067">ATP-binding</keyword>
<keyword id="KW-0963">Cytoplasm</keyword>
<keyword id="KW-0547">Nucleotide-binding</keyword>
<keyword id="KW-0548">Nucleotidyltransferase</keyword>
<keyword id="KW-0808">Transferase</keyword>
<keyword id="KW-0819">tRNA processing</keyword>
<accession>Q4UQ07</accession>
<gene>
    <name evidence="1" type="primary">tsaC</name>
    <name type="synonym">rimN</name>
    <name type="ordered locus">XC_3826</name>
</gene>